<evidence type="ECO:0000255" key="1">
    <source>
        <dbReference type="HAMAP-Rule" id="MF_01072"/>
    </source>
</evidence>
<evidence type="ECO:0000256" key="2">
    <source>
        <dbReference type="SAM" id="MobiDB-lite"/>
    </source>
</evidence>
<keyword id="KW-0997">Cell inner membrane</keyword>
<keyword id="KW-1003">Cell membrane</keyword>
<keyword id="KW-0328">Glycosyltransferase</keyword>
<keyword id="KW-0472">Membrane</keyword>
<keyword id="KW-1185">Reference proteome</keyword>
<keyword id="KW-0808">Transferase</keyword>
<keyword id="KW-0812">Transmembrane</keyword>
<keyword id="KW-1133">Transmembrane helix</keyword>
<accession>Q82SA8</accession>
<protein>
    <recommendedName>
        <fullName evidence="1">Glucans biosynthesis glucosyltransferase H</fullName>
        <ecNumber evidence="1">2.4.1.-</ecNumber>
    </recommendedName>
</protein>
<gene>
    <name evidence="1" type="primary">opgH</name>
    <name type="synonym">mdoH</name>
    <name type="ordered locus">NE2438</name>
</gene>
<reference key="1">
    <citation type="journal article" date="2003" name="J. Bacteriol.">
        <title>Complete genome sequence of the ammonia-oxidizing bacterium and obligate chemolithoautotroph Nitrosomonas europaea.</title>
        <authorList>
            <person name="Chain P."/>
            <person name="Lamerdin J.E."/>
            <person name="Larimer F.W."/>
            <person name="Regala W."/>
            <person name="Lao V."/>
            <person name="Land M.L."/>
            <person name="Hauser L."/>
            <person name="Hooper A.B."/>
            <person name="Klotz M.G."/>
            <person name="Norton J."/>
            <person name="Sayavedra-Soto L.A."/>
            <person name="Arciero D.M."/>
            <person name="Hommes N.G."/>
            <person name="Whittaker M.M."/>
            <person name="Arp D.J."/>
        </authorList>
    </citation>
    <scope>NUCLEOTIDE SEQUENCE [LARGE SCALE GENOMIC DNA]</scope>
    <source>
        <strain>ATCC 19718 / CIP 103999 / KCTC 2705 / NBRC 14298</strain>
    </source>
</reference>
<organism>
    <name type="scientific">Nitrosomonas europaea (strain ATCC 19718 / CIP 103999 / KCTC 2705 / NBRC 14298)</name>
    <dbReference type="NCBI Taxonomy" id="228410"/>
    <lineage>
        <taxon>Bacteria</taxon>
        <taxon>Pseudomonadati</taxon>
        <taxon>Pseudomonadota</taxon>
        <taxon>Betaproteobacteria</taxon>
        <taxon>Nitrosomonadales</taxon>
        <taxon>Nitrosomonadaceae</taxon>
        <taxon>Nitrosomonas</taxon>
    </lineage>
</organism>
<sequence length="867" mass="99282">MNKTTEYIDALPLTVAEKATLPATDIRTLHETLNPEHHDYAREDDSPLGSVKARLEQSWPDSLVNRQLTEDDEGRTQLETMPKATRSSISPDPWRTNPIGRFWDHLRGHNATPHHVSRLTKEEQAHEQKWCTVGTIRRYILLLLTFSQTALATWYMKTILPYQGWALIDPIDMIGQDIWISFMQLLPYILQSGILILFAILFCWISAGFWTALMGFLQLLIGKDKYSISASLAGDVPINPEHRTALIMPICNEDVDRVFAGLRATWESVKATNQQQHFDIYILSDSYDPDICVAEQKAWIELLAEVQDKGQIFYRRRGRRVKRKSGNIDDFCRRWGSQYSYMVVLDADSVMSGECLTSLVRLMEANPNAGIIQSWPRASGMDTFYARCQQFATRVYGPLFTAGLHFWQLGESHYWGHNAIIRVQPFIEHCTLALLPGEGTFAGSILSHDFVEAALMRRAGWGVWIAYDLPGSYEELPPNLLDELKRDRRWCHGNLMNFRLFLVKGLHPVHRAVFLTGVMSYLSAPLWFMFLALSTALQVVHAFTEPHYFLQPHQLFPVWPQWQPELAIALLASTMVLLFLPKLLSILLIWCKGTKEYGGFIRVTISLLLEVILSVLLAPVRMLFHTVFVVSAFLGWKVAWKSPQRDDDSTTWREAFMRHGSQLLLGLVWATGMAWLDLRFLFWLAPIVFSLILSPFVSVFSSRASVGLRAKRWKLLLIPEEYSPPKVLVDTDNYLMMNRNRTLNDGFMHAVFHPSFNALTTATATARHRKSKVLEIARDHHIEQALNEPPDKLNRDCRLTLLSDPVIMSRLHYCVWAMPEKYASWVNHYQQLTLNPSALKQCEPNIEEEADYAEPTAQIDMALPGTP</sequence>
<name>OPGH_NITEU</name>
<comment type="function">
    <text evidence="1">Involved in the biosynthesis of osmoregulated periplasmic glucans (OPGs).</text>
</comment>
<comment type="pathway">
    <text evidence="1">Glycan metabolism; osmoregulated periplasmic glucan (OPG) biosynthesis.</text>
</comment>
<comment type="subcellular location">
    <subcellularLocation>
        <location evidence="1">Cell inner membrane</location>
        <topology evidence="1">Multi-pass membrane protein</topology>
    </subcellularLocation>
</comment>
<comment type="similarity">
    <text evidence="1">Belongs to the glycosyltransferase 2 family. OpgH subfamily.</text>
</comment>
<proteinExistence type="inferred from homology"/>
<feature type="chain" id="PRO_0000210353" description="Glucans biosynthesis glucosyltransferase H">
    <location>
        <begin position="1"/>
        <end position="867"/>
    </location>
</feature>
<feature type="transmembrane region" description="Helical" evidence="1">
    <location>
        <begin position="139"/>
        <end position="156"/>
    </location>
</feature>
<feature type="transmembrane region" description="Helical" evidence="1">
    <location>
        <begin position="194"/>
        <end position="216"/>
    </location>
</feature>
<feature type="transmembrane region" description="Helical" evidence="1">
    <location>
        <begin position="518"/>
        <end position="540"/>
    </location>
</feature>
<feature type="transmembrane region" description="Helical" evidence="1">
    <location>
        <begin position="568"/>
        <end position="590"/>
    </location>
</feature>
<feature type="transmembrane region" description="Helical" evidence="1">
    <location>
        <begin position="603"/>
        <end position="625"/>
    </location>
</feature>
<feature type="transmembrane region" description="Helical" evidence="1">
    <location>
        <begin position="680"/>
        <end position="702"/>
    </location>
</feature>
<feature type="region of interest" description="Disordered" evidence="2">
    <location>
        <begin position="71"/>
        <end position="91"/>
    </location>
</feature>
<dbReference type="EC" id="2.4.1.-" evidence="1"/>
<dbReference type="EMBL" id="AL954747">
    <property type="protein sequence ID" value="CAD86350.1"/>
    <property type="molecule type" value="Genomic_DNA"/>
</dbReference>
<dbReference type="RefSeq" id="WP_011112906.1">
    <property type="nucleotide sequence ID" value="NC_004757.1"/>
</dbReference>
<dbReference type="STRING" id="228410.NE2438"/>
<dbReference type="CAZy" id="GT2">
    <property type="family name" value="Glycosyltransferase Family 2"/>
</dbReference>
<dbReference type="GeneID" id="87105569"/>
<dbReference type="KEGG" id="neu:NE2438"/>
<dbReference type="eggNOG" id="COG2943">
    <property type="taxonomic scope" value="Bacteria"/>
</dbReference>
<dbReference type="HOGENOM" id="CLU_015730_0_0_4"/>
<dbReference type="OrthoDB" id="9775281at2"/>
<dbReference type="PhylomeDB" id="Q82SA8"/>
<dbReference type="UniPathway" id="UPA00637"/>
<dbReference type="Proteomes" id="UP000001416">
    <property type="component" value="Chromosome"/>
</dbReference>
<dbReference type="GO" id="GO:0005886">
    <property type="term" value="C:plasma membrane"/>
    <property type="evidence" value="ECO:0007669"/>
    <property type="project" value="UniProtKB-SubCell"/>
</dbReference>
<dbReference type="GO" id="GO:0016758">
    <property type="term" value="F:hexosyltransferase activity"/>
    <property type="evidence" value="ECO:0007669"/>
    <property type="project" value="UniProtKB-UniRule"/>
</dbReference>
<dbReference type="GO" id="GO:0009250">
    <property type="term" value="P:glucan biosynthetic process"/>
    <property type="evidence" value="ECO:0007669"/>
    <property type="project" value="UniProtKB-UniRule"/>
</dbReference>
<dbReference type="CDD" id="cd04191">
    <property type="entry name" value="Glucan_BSP_MdoH"/>
    <property type="match status" value="1"/>
</dbReference>
<dbReference type="FunFam" id="3.90.550.10:FF:000047">
    <property type="entry name" value="Glucans biosynthesis glucosyltransferase H"/>
    <property type="match status" value="1"/>
</dbReference>
<dbReference type="Gene3D" id="3.90.550.10">
    <property type="entry name" value="Spore Coat Polysaccharide Biosynthesis Protein SpsA, Chain A"/>
    <property type="match status" value="1"/>
</dbReference>
<dbReference type="HAMAP" id="MF_01072">
    <property type="entry name" value="MdoH_OpgH"/>
    <property type="match status" value="1"/>
</dbReference>
<dbReference type="InterPro" id="IPR023725">
    <property type="entry name" value="Glucans_biosynth_gluTrFase_H"/>
</dbReference>
<dbReference type="InterPro" id="IPR001173">
    <property type="entry name" value="Glyco_trans_2-like"/>
</dbReference>
<dbReference type="InterPro" id="IPR050321">
    <property type="entry name" value="Glycosyltr_2/OpgH_subfam"/>
</dbReference>
<dbReference type="InterPro" id="IPR029044">
    <property type="entry name" value="Nucleotide-diphossugar_trans"/>
</dbReference>
<dbReference type="NCBIfam" id="NF003955">
    <property type="entry name" value="PRK05454.1-1"/>
    <property type="match status" value="1"/>
</dbReference>
<dbReference type="NCBIfam" id="NF003958">
    <property type="entry name" value="PRK05454.2-1"/>
    <property type="match status" value="1"/>
</dbReference>
<dbReference type="NCBIfam" id="NF003962">
    <property type="entry name" value="PRK05454.2-5"/>
    <property type="match status" value="1"/>
</dbReference>
<dbReference type="PANTHER" id="PTHR43867">
    <property type="entry name" value="CELLULOSE SYNTHASE CATALYTIC SUBUNIT A [UDP-FORMING]"/>
    <property type="match status" value="1"/>
</dbReference>
<dbReference type="PANTHER" id="PTHR43867:SF5">
    <property type="entry name" value="GLUCANS BIOSYNTHESIS GLUCOSYLTRANSFERASE H"/>
    <property type="match status" value="1"/>
</dbReference>
<dbReference type="Pfam" id="PF00535">
    <property type="entry name" value="Glycos_transf_2"/>
    <property type="match status" value="1"/>
</dbReference>
<dbReference type="SUPFAM" id="SSF53448">
    <property type="entry name" value="Nucleotide-diphospho-sugar transferases"/>
    <property type="match status" value="1"/>
</dbReference>